<proteinExistence type="evidence at protein level"/>
<comment type="function">
    <text evidence="1">Regulates G protein-coupled receptor signaling cascades, including signaling downstream of the muscarinic acetylcholine receptor CHRM2. Inhibits signal transduction by increasing the GTPase activity of G protein alpha subunits, thereby driving them into their inactive GDP-bound form. Modulates the activity of potassium channels that are activated in response to CHRM2 signaling. Activity on GNAZ is inhibited by palmitoylation of the G-protein.</text>
</comment>
<comment type="subunit">
    <text evidence="1">Interacts with GNAZ, GNAI1 and GNAI3. Associates specifically with the activated, GTP-bound forms of GNAZ and GNAI3.</text>
</comment>
<comment type="subcellular location">
    <subcellularLocation>
        <location evidence="1">Cytoplasm</location>
        <location evidence="1">Cytosol</location>
    </subcellularLocation>
    <subcellularLocation>
        <location evidence="1">Nucleus</location>
    </subcellularLocation>
    <text evidence="1">Forskolin treatment promotes phosphorylation and translocation to the nucleus.</text>
</comment>
<organism>
    <name type="scientific">Mus musculus</name>
    <name type="common">Mouse</name>
    <dbReference type="NCBI Taxonomy" id="10090"/>
    <lineage>
        <taxon>Eukaryota</taxon>
        <taxon>Metazoa</taxon>
        <taxon>Chordata</taxon>
        <taxon>Craniata</taxon>
        <taxon>Vertebrata</taxon>
        <taxon>Euteleostomi</taxon>
        <taxon>Mammalia</taxon>
        <taxon>Eutheria</taxon>
        <taxon>Euarchontoglires</taxon>
        <taxon>Glires</taxon>
        <taxon>Rodentia</taxon>
        <taxon>Myomorpha</taxon>
        <taxon>Muroidea</taxon>
        <taxon>Muridae</taxon>
        <taxon>Murinae</taxon>
        <taxon>Mus</taxon>
        <taxon>Mus</taxon>
    </lineage>
</organism>
<accession>Q9CQE5</accession>
<accession>Q9D3L2</accession>
<feature type="chain" id="PRO_0000204208" description="Regulator of G-protein signaling 10">
    <location>
        <begin position="1"/>
        <end position="181"/>
    </location>
</feature>
<feature type="domain" description="RGS" evidence="2">
    <location>
        <begin position="41"/>
        <end position="156"/>
    </location>
</feature>
<feature type="region of interest" description="Disordered" evidence="3">
    <location>
        <begin position="1"/>
        <end position="35"/>
    </location>
</feature>
<feature type="region of interest" description="Disordered" evidence="3">
    <location>
        <begin position="155"/>
        <end position="181"/>
    </location>
</feature>
<feature type="modified residue" description="Phosphoserine" evidence="1">
    <location>
        <position position="24"/>
    </location>
</feature>
<feature type="modified residue" description="Phosphoserine" evidence="5">
    <location>
        <position position="41"/>
    </location>
</feature>
<feature type="modified residue" description="Phosphoserine" evidence="1">
    <location>
        <position position="176"/>
    </location>
</feature>
<feature type="lipid moiety-binding region" description="S-palmitoyl cysteine" evidence="1">
    <location>
        <position position="74"/>
    </location>
</feature>
<feature type="sequence conflict" description="In Ref. 1; BAB30688." evidence="4" ref="1">
    <original>A</original>
    <variation>E</variation>
    <location>
        <position position="73"/>
    </location>
</feature>
<keyword id="KW-0963">Cytoplasm</keyword>
<keyword id="KW-0343">GTPase activation</keyword>
<keyword id="KW-0449">Lipoprotein</keyword>
<keyword id="KW-0539">Nucleus</keyword>
<keyword id="KW-0564">Palmitate</keyword>
<keyword id="KW-0597">Phosphoprotein</keyword>
<keyword id="KW-1185">Reference proteome</keyword>
<keyword id="KW-0734">Signal transduction inhibitor</keyword>
<reference key="1">
    <citation type="journal article" date="2005" name="Science">
        <title>The transcriptional landscape of the mammalian genome.</title>
        <authorList>
            <person name="Carninci P."/>
            <person name="Kasukawa T."/>
            <person name="Katayama S."/>
            <person name="Gough J."/>
            <person name="Frith M.C."/>
            <person name="Maeda N."/>
            <person name="Oyama R."/>
            <person name="Ravasi T."/>
            <person name="Lenhard B."/>
            <person name="Wells C."/>
            <person name="Kodzius R."/>
            <person name="Shimokawa K."/>
            <person name="Bajic V.B."/>
            <person name="Brenner S.E."/>
            <person name="Batalov S."/>
            <person name="Forrest A.R."/>
            <person name="Zavolan M."/>
            <person name="Davis M.J."/>
            <person name="Wilming L.G."/>
            <person name="Aidinis V."/>
            <person name="Allen J.E."/>
            <person name="Ambesi-Impiombato A."/>
            <person name="Apweiler R."/>
            <person name="Aturaliya R.N."/>
            <person name="Bailey T.L."/>
            <person name="Bansal M."/>
            <person name="Baxter L."/>
            <person name="Beisel K.W."/>
            <person name="Bersano T."/>
            <person name="Bono H."/>
            <person name="Chalk A.M."/>
            <person name="Chiu K.P."/>
            <person name="Choudhary V."/>
            <person name="Christoffels A."/>
            <person name="Clutterbuck D.R."/>
            <person name="Crowe M.L."/>
            <person name="Dalla E."/>
            <person name="Dalrymple B.P."/>
            <person name="de Bono B."/>
            <person name="Della Gatta G."/>
            <person name="di Bernardo D."/>
            <person name="Down T."/>
            <person name="Engstrom P."/>
            <person name="Fagiolini M."/>
            <person name="Faulkner G."/>
            <person name="Fletcher C.F."/>
            <person name="Fukushima T."/>
            <person name="Furuno M."/>
            <person name="Futaki S."/>
            <person name="Gariboldi M."/>
            <person name="Georgii-Hemming P."/>
            <person name="Gingeras T.R."/>
            <person name="Gojobori T."/>
            <person name="Green R.E."/>
            <person name="Gustincich S."/>
            <person name="Harbers M."/>
            <person name="Hayashi Y."/>
            <person name="Hensch T.K."/>
            <person name="Hirokawa N."/>
            <person name="Hill D."/>
            <person name="Huminiecki L."/>
            <person name="Iacono M."/>
            <person name="Ikeo K."/>
            <person name="Iwama A."/>
            <person name="Ishikawa T."/>
            <person name="Jakt M."/>
            <person name="Kanapin A."/>
            <person name="Katoh M."/>
            <person name="Kawasawa Y."/>
            <person name="Kelso J."/>
            <person name="Kitamura H."/>
            <person name="Kitano H."/>
            <person name="Kollias G."/>
            <person name="Krishnan S.P."/>
            <person name="Kruger A."/>
            <person name="Kummerfeld S.K."/>
            <person name="Kurochkin I.V."/>
            <person name="Lareau L.F."/>
            <person name="Lazarevic D."/>
            <person name="Lipovich L."/>
            <person name="Liu J."/>
            <person name="Liuni S."/>
            <person name="McWilliam S."/>
            <person name="Madan Babu M."/>
            <person name="Madera M."/>
            <person name="Marchionni L."/>
            <person name="Matsuda H."/>
            <person name="Matsuzawa S."/>
            <person name="Miki H."/>
            <person name="Mignone F."/>
            <person name="Miyake S."/>
            <person name="Morris K."/>
            <person name="Mottagui-Tabar S."/>
            <person name="Mulder N."/>
            <person name="Nakano N."/>
            <person name="Nakauchi H."/>
            <person name="Ng P."/>
            <person name="Nilsson R."/>
            <person name="Nishiguchi S."/>
            <person name="Nishikawa S."/>
            <person name="Nori F."/>
            <person name="Ohara O."/>
            <person name="Okazaki Y."/>
            <person name="Orlando V."/>
            <person name="Pang K.C."/>
            <person name="Pavan W.J."/>
            <person name="Pavesi G."/>
            <person name="Pesole G."/>
            <person name="Petrovsky N."/>
            <person name="Piazza S."/>
            <person name="Reed J."/>
            <person name="Reid J.F."/>
            <person name="Ring B.Z."/>
            <person name="Ringwald M."/>
            <person name="Rost B."/>
            <person name="Ruan Y."/>
            <person name="Salzberg S.L."/>
            <person name="Sandelin A."/>
            <person name="Schneider C."/>
            <person name="Schoenbach C."/>
            <person name="Sekiguchi K."/>
            <person name="Semple C.A."/>
            <person name="Seno S."/>
            <person name="Sessa L."/>
            <person name="Sheng Y."/>
            <person name="Shibata Y."/>
            <person name="Shimada H."/>
            <person name="Shimada K."/>
            <person name="Silva D."/>
            <person name="Sinclair B."/>
            <person name="Sperling S."/>
            <person name="Stupka E."/>
            <person name="Sugiura K."/>
            <person name="Sultana R."/>
            <person name="Takenaka Y."/>
            <person name="Taki K."/>
            <person name="Tammoja K."/>
            <person name="Tan S.L."/>
            <person name="Tang S."/>
            <person name="Taylor M.S."/>
            <person name="Tegner J."/>
            <person name="Teichmann S.A."/>
            <person name="Ueda H.R."/>
            <person name="van Nimwegen E."/>
            <person name="Verardo R."/>
            <person name="Wei C.L."/>
            <person name="Yagi K."/>
            <person name="Yamanishi H."/>
            <person name="Zabarovsky E."/>
            <person name="Zhu S."/>
            <person name="Zimmer A."/>
            <person name="Hide W."/>
            <person name="Bult C."/>
            <person name="Grimmond S.M."/>
            <person name="Teasdale R.D."/>
            <person name="Liu E.T."/>
            <person name="Brusic V."/>
            <person name="Quackenbush J."/>
            <person name="Wahlestedt C."/>
            <person name="Mattick J.S."/>
            <person name="Hume D.A."/>
            <person name="Kai C."/>
            <person name="Sasaki D."/>
            <person name="Tomaru Y."/>
            <person name="Fukuda S."/>
            <person name="Kanamori-Katayama M."/>
            <person name="Suzuki M."/>
            <person name="Aoki J."/>
            <person name="Arakawa T."/>
            <person name="Iida J."/>
            <person name="Imamura K."/>
            <person name="Itoh M."/>
            <person name="Kato T."/>
            <person name="Kawaji H."/>
            <person name="Kawagashira N."/>
            <person name="Kawashima T."/>
            <person name="Kojima M."/>
            <person name="Kondo S."/>
            <person name="Konno H."/>
            <person name="Nakano K."/>
            <person name="Ninomiya N."/>
            <person name="Nishio T."/>
            <person name="Okada M."/>
            <person name="Plessy C."/>
            <person name="Shibata K."/>
            <person name="Shiraki T."/>
            <person name="Suzuki S."/>
            <person name="Tagami M."/>
            <person name="Waki K."/>
            <person name="Watahiki A."/>
            <person name="Okamura-Oho Y."/>
            <person name="Suzuki H."/>
            <person name="Kawai J."/>
            <person name="Hayashizaki Y."/>
        </authorList>
    </citation>
    <scope>NUCLEOTIDE SEQUENCE [LARGE SCALE MRNA]</scope>
    <source>
        <strain>C57BL/6J</strain>
        <tissue>Head</tissue>
        <tissue>Thymus</tissue>
        <tissue>Tongue</tissue>
    </source>
</reference>
<reference key="2">
    <citation type="journal article" date="2010" name="Cell">
        <title>A tissue-specific atlas of mouse protein phosphorylation and expression.</title>
        <authorList>
            <person name="Huttlin E.L."/>
            <person name="Jedrychowski M.P."/>
            <person name="Elias J.E."/>
            <person name="Goswami T."/>
            <person name="Rad R."/>
            <person name="Beausoleil S.A."/>
            <person name="Villen J."/>
            <person name="Haas W."/>
            <person name="Sowa M.E."/>
            <person name="Gygi S.P."/>
        </authorList>
    </citation>
    <scope>PHOSPHORYLATION [LARGE SCALE ANALYSIS] AT SER-41</scope>
    <scope>IDENTIFICATION BY MASS SPECTROMETRY [LARGE SCALE ANALYSIS]</scope>
    <source>
        <tissue>Brain</tissue>
        <tissue>Brown adipose tissue</tissue>
        <tissue>Liver</tissue>
        <tissue>Lung</tissue>
        <tissue>Spleen</tissue>
        <tissue>Testis</tissue>
    </source>
</reference>
<dbReference type="EMBL" id="AK009686">
    <property type="protein sequence ID" value="BAB26440.1"/>
    <property type="molecule type" value="mRNA"/>
</dbReference>
<dbReference type="EMBL" id="AK009283">
    <property type="protein sequence ID" value="BAB26193.1"/>
    <property type="molecule type" value="mRNA"/>
</dbReference>
<dbReference type="EMBL" id="AK017314">
    <property type="protein sequence ID" value="BAB30688.1"/>
    <property type="molecule type" value="mRNA"/>
</dbReference>
<dbReference type="EMBL" id="AK088009">
    <property type="protein sequence ID" value="BAC40091.1"/>
    <property type="molecule type" value="mRNA"/>
</dbReference>
<dbReference type="CCDS" id="CCDS21896.1"/>
<dbReference type="RefSeq" id="NP_080694.1">
    <property type="nucleotide sequence ID" value="NM_026418.3"/>
</dbReference>
<dbReference type="SMR" id="Q9CQE5"/>
<dbReference type="BioGRID" id="212492">
    <property type="interactions" value="5"/>
</dbReference>
<dbReference type="FunCoup" id="Q9CQE5">
    <property type="interactions" value="227"/>
</dbReference>
<dbReference type="STRING" id="10090.ENSMUSP00000033133"/>
<dbReference type="iPTMnet" id="Q9CQE5"/>
<dbReference type="PhosphoSitePlus" id="Q9CQE5"/>
<dbReference type="PaxDb" id="10090-ENSMUSP00000033133"/>
<dbReference type="ProteomicsDB" id="254949"/>
<dbReference type="Pumba" id="Q9CQE5"/>
<dbReference type="Antibodypedia" id="3878">
    <property type="antibodies" value="223 antibodies from 31 providers"/>
</dbReference>
<dbReference type="DNASU" id="67865"/>
<dbReference type="Ensembl" id="ENSMUST00000033133.12">
    <property type="protein sequence ID" value="ENSMUSP00000033133.6"/>
    <property type="gene ID" value="ENSMUSG00000030844.12"/>
</dbReference>
<dbReference type="GeneID" id="67865"/>
<dbReference type="KEGG" id="mmu:67865"/>
<dbReference type="UCSC" id="uc009jyw.1">
    <property type="organism name" value="mouse"/>
</dbReference>
<dbReference type="AGR" id="MGI:1915115"/>
<dbReference type="CTD" id="6001"/>
<dbReference type="MGI" id="MGI:1915115">
    <property type="gene designation" value="Rgs10"/>
</dbReference>
<dbReference type="VEuPathDB" id="HostDB:ENSMUSG00000030844"/>
<dbReference type="eggNOG" id="KOG3589">
    <property type="taxonomic scope" value="Eukaryota"/>
</dbReference>
<dbReference type="GeneTree" id="ENSGT00940000161426"/>
<dbReference type="HOGENOM" id="CLU_059863_1_4_1"/>
<dbReference type="InParanoid" id="Q9CQE5"/>
<dbReference type="OMA" id="SNKASYQ"/>
<dbReference type="OrthoDB" id="196547at2759"/>
<dbReference type="PhylomeDB" id="Q9CQE5"/>
<dbReference type="TreeFam" id="TF315837"/>
<dbReference type="BioGRID-ORCS" id="67865">
    <property type="hits" value="1 hit in 76 CRISPR screens"/>
</dbReference>
<dbReference type="ChiTaRS" id="Rgs10">
    <property type="organism name" value="mouse"/>
</dbReference>
<dbReference type="PRO" id="PR:Q9CQE5"/>
<dbReference type="Proteomes" id="UP000000589">
    <property type="component" value="Chromosome 7"/>
</dbReference>
<dbReference type="RNAct" id="Q9CQE5">
    <property type="molecule type" value="protein"/>
</dbReference>
<dbReference type="Bgee" id="ENSMUSG00000030844">
    <property type="expression patterns" value="Expressed in blood and 249 other cell types or tissues"/>
</dbReference>
<dbReference type="ExpressionAtlas" id="Q9CQE5">
    <property type="expression patterns" value="baseline and differential"/>
</dbReference>
<dbReference type="GO" id="GO:0005829">
    <property type="term" value="C:cytosol"/>
    <property type="evidence" value="ECO:0000250"/>
    <property type="project" value="UniProtKB"/>
</dbReference>
<dbReference type="GO" id="GO:0016604">
    <property type="term" value="C:nuclear body"/>
    <property type="evidence" value="ECO:0007669"/>
    <property type="project" value="Ensembl"/>
</dbReference>
<dbReference type="GO" id="GO:0005634">
    <property type="term" value="C:nucleus"/>
    <property type="evidence" value="ECO:0000250"/>
    <property type="project" value="UniProtKB"/>
</dbReference>
<dbReference type="GO" id="GO:0045202">
    <property type="term" value="C:synapse"/>
    <property type="evidence" value="ECO:0007669"/>
    <property type="project" value="GOC"/>
</dbReference>
<dbReference type="GO" id="GO:0001965">
    <property type="term" value="F:G-protein alpha-subunit binding"/>
    <property type="evidence" value="ECO:0007669"/>
    <property type="project" value="Ensembl"/>
</dbReference>
<dbReference type="GO" id="GO:0005096">
    <property type="term" value="F:GTPase activator activity"/>
    <property type="evidence" value="ECO:0000250"/>
    <property type="project" value="UniProtKB"/>
</dbReference>
<dbReference type="GO" id="GO:0007213">
    <property type="term" value="P:G protein-coupled acetylcholine receptor signaling pathway"/>
    <property type="evidence" value="ECO:0000250"/>
    <property type="project" value="UniProtKB"/>
</dbReference>
<dbReference type="GO" id="GO:0009968">
    <property type="term" value="P:negative regulation of signal transduction"/>
    <property type="evidence" value="ECO:0007669"/>
    <property type="project" value="UniProtKB-KW"/>
</dbReference>
<dbReference type="GO" id="GO:0043547">
    <property type="term" value="P:positive regulation of GTPase activity"/>
    <property type="evidence" value="ECO:0000250"/>
    <property type="project" value="UniProtKB"/>
</dbReference>
<dbReference type="GO" id="GO:0008277">
    <property type="term" value="P:regulation of G protein-coupled receptor signaling pathway"/>
    <property type="evidence" value="ECO:0007669"/>
    <property type="project" value="InterPro"/>
</dbReference>
<dbReference type="CDD" id="cd08741">
    <property type="entry name" value="RGS_RGS10"/>
    <property type="match status" value="1"/>
</dbReference>
<dbReference type="FunFam" id="1.10.167.10:FF:000001">
    <property type="entry name" value="Putative regulator of g-protein signaling 12"/>
    <property type="match status" value="1"/>
</dbReference>
<dbReference type="Gene3D" id="1.10.196.10">
    <property type="match status" value="1"/>
</dbReference>
<dbReference type="Gene3D" id="1.10.167.10">
    <property type="entry name" value="Regulator of G-protein Signalling 4, domain 2"/>
    <property type="match status" value="1"/>
</dbReference>
<dbReference type="InterPro" id="IPR016137">
    <property type="entry name" value="RGS"/>
</dbReference>
<dbReference type="InterPro" id="IPR046995">
    <property type="entry name" value="RGS10/12/14-like"/>
</dbReference>
<dbReference type="InterPro" id="IPR037879">
    <property type="entry name" value="RGS10_RGS"/>
</dbReference>
<dbReference type="InterPro" id="IPR036305">
    <property type="entry name" value="RGS_sf"/>
</dbReference>
<dbReference type="InterPro" id="IPR024066">
    <property type="entry name" value="RGS_subdom1/3"/>
</dbReference>
<dbReference type="InterPro" id="IPR044926">
    <property type="entry name" value="RGS_subdomain_2"/>
</dbReference>
<dbReference type="PANTHER" id="PTHR45945">
    <property type="entry name" value="REGULATOR OF G-PROTEIN SIGNALING LOCO"/>
    <property type="match status" value="1"/>
</dbReference>
<dbReference type="PANTHER" id="PTHR45945:SF3">
    <property type="entry name" value="REGULATOR OF G-PROTEIN SIGNALING LOCO"/>
    <property type="match status" value="1"/>
</dbReference>
<dbReference type="Pfam" id="PF00615">
    <property type="entry name" value="RGS"/>
    <property type="match status" value="1"/>
</dbReference>
<dbReference type="PRINTS" id="PR01301">
    <property type="entry name" value="RGSPROTEIN"/>
</dbReference>
<dbReference type="SMART" id="SM00315">
    <property type="entry name" value="RGS"/>
    <property type="match status" value="1"/>
</dbReference>
<dbReference type="SUPFAM" id="SSF48097">
    <property type="entry name" value="Regulator of G-protein signaling, RGS"/>
    <property type="match status" value="1"/>
</dbReference>
<dbReference type="PROSITE" id="PS50132">
    <property type="entry name" value="RGS"/>
    <property type="match status" value="1"/>
</dbReference>
<name>RGS10_MOUSE</name>
<evidence type="ECO:0000250" key="1">
    <source>
        <dbReference type="UniProtKB" id="O43665"/>
    </source>
</evidence>
<evidence type="ECO:0000255" key="2">
    <source>
        <dbReference type="PROSITE-ProRule" id="PRU00171"/>
    </source>
</evidence>
<evidence type="ECO:0000256" key="3">
    <source>
        <dbReference type="SAM" id="MobiDB-lite"/>
    </source>
</evidence>
<evidence type="ECO:0000305" key="4"/>
<evidence type="ECO:0007744" key="5">
    <source>
    </source>
</evidence>
<gene>
    <name type="primary">Rgs10</name>
</gene>
<protein>
    <recommendedName>
        <fullName>Regulator of G-protein signaling 10</fullName>
        <shortName>RGS10</shortName>
    </recommendedName>
</protein>
<sequence>MFTRAVSRLSRKRPPSDIHDGDGSSSSGHQSLKSTAKWASSLENLLEDPEGVQRFREFLKKEFSEENVLFWLACEDFKKTEDRKQMQEKAKEIYMTFLSNKASSQVNVEGQSRLTEKILEEPHPLMFQKLQDQIFNLMKYDSYSRFLKSDLFLKPKRTEEEEEEPPDAQTAAKRASRIYNT</sequence>